<sequence length="368" mass="38678">MASKTAADHFNRDSFVLAIDAMGGDHAPEIVVEGMAIAAERHPDARFLLVGDETLLAPLLARWPRAASVCTVRHAPVKVTGEMKAAAALRLRDSSMRIAIDAVAHGEASGVVSAGNSGALLALAKIILKTLPGIDRPALAAIMPSARGDILMLDLGANVLCDPRNLVEFAIMGDVFARSVLGLTAPRIGLLNVGSEEQKGDDRIRTAAEMLRTSHLAQQFHGFVEGHDIAGGTTDVVVADGFSGNIALKTAEGTAKMLGGLLKQIFTSTILARLGYLLARGGLERLREWLDPRRYNGAVLVGLNGVVVKSHGGTDAQGFAHAVDVGMDMVSNRSSDRIREGIAKLVELSGAAHPARDKDGTAQLAEAR</sequence>
<keyword id="KW-0963">Cytoplasm</keyword>
<keyword id="KW-0444">Lipid biosynthesis</keyword>
<keyword id="KW-0443">Lipid metabolism</keyword>
<keyword id="KW-0594">Phospholipid biosynthesis</keyword>
<keyword id="KW-1208">Phospholipid metabolism</keyword>
<keyword id="KW-1185">Reference proteome</keyword>
<keyword id="KW-0808">Transferase</keyword>
<gene>
    <name evidence="1" type="primary">plsX</name>
    <name type="ordered locus">GbCGDNIH1_1013</name>
</gene>
<organism>
    <name type="scientific">Granulibacter bethesdensis (strain ATCC BAA-1260 / CGDNIH1)</name>
    <dbReference type="NCBI Taxonomy" id="391165"/>
    <lineage>
        <taxon>Bacteria</taxon>
        <taxon>Pseudomonadati</taxon>
        <taxon>Pseudomonadota</taxon>
        <taxon>Alphaproteobacteria</taxon>
        <taxon>Acetobacterales</taxon>
        <taxon>Acetobacteraceae</taxon>
        <taxon>Granulibacter</taxon>
    </lineage>
</organism>
<protein>
    <recommendedName>
        <fullName evidence="1">Phosphate acyltransferase</fullName>
        <ecNumber evidence="1">2.3.1.274</ecNumber>
    </recommendedName>
    <alternativeName>
        <fullName evidence="1">Acyl-ACP phosphotransacylase</fullName>
    </alternativeName>
    <alternativeName>
        <fullName evidence="1">Acyl-[acyl-carrier-protein]--phosphate acyltransferase</fullName>
    </alternativeName>
    <alternativeName>
        <fullName evidence="1">Phosphate-acyl-ACP acyltransferase</fullName>
    </alternativeName>
</protein>
<accession>Q0BTE1</accession>
<name>PLSX_GRABC</name>
<dbReference type="EC" id="2.3.1.274" evidence="1"/>
<dbReference type="EMBL" id="CP000394">
    <property type="protein sequence ID" value="ABI61911.1"/>
    <property type="molecule type" value="Genomic_DNA"/>
</dbReference>
<dbReference type="RefSeq" id="WP_011631720.1">
    <property type="nucleotide sequence ID" value="NC_008343.2"/>
</dbReference>
<dbReference type="SMR" id="Q0BTE1"/>
<dbReference type="STRING" id="391165.GbCGDNIH1_1013"/>
<dbReference type="GeneID" id="69745272"/>
<dbReference type="KEGG" id="gbe:GbCGDNIH1_1013"/>
<dbReference type="eggNOG" id="COG0416">
    <property type="taxonomic scope" value="Bacteria"/>
</dbReference>
<dbReference type="HOGENOM" id="CLU_039379_1_0_5"/>
<dbReference type="OrthoDB" id="9806408at2"/>
<dbReference type="UniPathway" id="UPA00085"/>
<dbReference type="Proteomes" id="UP000001963">
    <property type="component" value="Chromosome"/>
</dbReference>
<dbReference type="GO" id="GO:0005737">
    <property type="term" value="C:cytoplasm"/>
    <property type="evidence" value="ECO:0007669"/>
    <property type="project" value="UniProtKB-SubCell"/>
</dbReference>
<dbReference type="GO" id="GO:0043811">
    <property type="term" value="F:phosphate:acyl-[acyl carrier protein] acyltransferase activity"/>
    <property type="evidence" value="ECO:0007669"/>
    <property type="project" value="UniProtKB-UniRule"/>
</dbReference>
<dbReference type="GO" id="GO:0006633">
    <property type="term" value="P:fatty acid biosynthetic process"/>
    <property type="evidence" value="ECO:0007669"/>
    <property type="project" value="UniProtKB-UniRule"/>
</dbReference>
<dbReference type="GO" id="GO:0008654">
    <property type="term" value="P:phospholipid biosynthetic process"/>
    <property type="evidence" value="ECO:0007669"/>
    <property type="project" value="UniProtKB-KW"/>
</dbReference>
<dbReference type="Gene3D" id="3.40.718.10">
    <property type="entry name" value="Isopropylmalate Dehydrogenase"/>
    <property type="match status" value="1"/>
</dbReference>
<dbReference type="HAMAP" id="MF_00019">
    <property type="entry name" value="PlsX"/>
    <property type="match status" value="1"/>
</dbReference>
<dbReference type="InterPro" id="IPR003664">
    <property type="entry name" value="FA_synthesis"/>
</dbReference>
<dbReference type="InterPro" id="IPR012281">
    <property type="entry name" value="Phospholipid_synth_PlsX-like"/>
</dbReference>
<dbReference type="NCBIfam" id="TIGR00182">
    <property type="entry name" value="plsX"/>
    <property type="match status" value="1"/>
</dbReference>
<dbReference type="PANTHER" id="PTHR30100">
    <property type="entry name" value="FATTY ACID/PHOSPHOLIPID SYNTHESIS PROTEIN PLSX"/>
    <property type="match status" value="1"/>
</dbReference>
<dbReference type="PANTHER" id="PTHR30100:SF1">
    <property type="entry name" value="PHOSPHATE ACYLTRANSFERASE"/>
    <property type="match status" value="1"/>
</dbReference>
<dbReference type="Pfam" id="PF02504">
    <property type="entry name" value="FA_synthesis"/>
    <property type="match status" value="1"/>
</dbReference>
<dbReference type="PIRSF" id="PIRSF002465">
    <property type="entry name" value="Phsphlp_syn_PlsX"/>
    <property type="match status" value="1"/>
</dbReference>
<dbReference type="SUPFAM" id="SSF53659">
    <property type="entry name" value="Isocitrate/Isopropylmalate dehydrogenase-like"/>
    <property type="match status" value="1"/>
</dbReference>
<evidence type="ECO:0000255" key="1">
    <source>
        <dbReference type="HAMAP-Rule" id="MF_00019"/>
    </source>
</evidence>
<reference key="1">
    <citation type="journal article" date="2007" name="J. Bacteriol.">
        <title>Genome sequence analysis of the emerging human pathogenic acetic acid bacterium Granulibacter bethesdensis.</title>
        <authorList>
            <person name="Greenberg D.E."/>
            <person name="Porcella S.F."/>
            <person name="Zelazny A.M."/>
            <person name="Virtaneva K."/>
            <person name="Sturdevant D.E."/>
            <person name="Kupko J.J. III"/>
            <person name="Barbian K.D."/>
            <person name="Babar A."/>
            <person name="Dorward D.W."/>
            <person name="Holland S.M."/>
        </authorList>
    </citation>
    <scope>NUCLEOTIDE SEQUENCE [LARGE SCALE GENOMIC DNA]</scope>
    <source>
        <strain>ATCC BAA-1260 / CGDNIH1</strain>
    </source>
</reference>
<proteinExistence type="inferred from homology"/>
<comment type="function">
    <text evidence="1">Catalyzes the reversible formation of acyl-phosphate (acyl-PO(4)) from acyl-[acyl-carrier-protein] (acyl-ACP). This enzyme utilizes acyl-ACP as fatty acyl donor, but not acyl-CoA.</text>
</comment>
<comment type="catalytic activity">
    <reaction evidence="1">
        <text>a fatty acyl-[ACP] + phosphate = an acyl phosphate + holo-[ACP]</text>
        <dbReference type="Rhea" id="RHEA:42292"/>
        <dbReference type="Rhea" id="RHEA-COMP:9685"/>
        <dbReference type="Rhea" id="RHEA-COMP:14125"/>
        <dbReference type="ChEBI" id="CHEBI:43474"/>
        <dbReference type="ChEBI" id="CHEBI:59918"/>
        <dbReference type="ChEBI" id="CHEBI:64479"/>
        <dbReference type="ChEBI" id="CHEBI:138651"/>
        <dbReference type="EC" id="2.3.1.274"/>
    </reaction>
</comment>
<comment type="pathway">
    <text evidence="1">Lipid metabolism; phospholipid metabolism.</text>
</comment>
<comment type="subunit">
    <text evidence="1">Homodimer. Probably interacts with PlsY.</text>
</comment>
<comment type="subcellular location">
    <subcellularLocation>
        <location evidence="1">Cytoplasm</location>
    </subcellularLocation>
    <text evidence="1">Associated with the membrane possibly through PlsY.</text>
</comment>
<comment type="similarity">
    <text evidence="1">Belongs to the PlsX family.</text>
</comment>
<feature type="chain" id="PRO_0000329231" description="Phosphate acyltransferase">
    <location>
        <begin position="1"/>
        <end position="368"/>
    </location>
</feature>